<protein>
    <recommendedName>
        <fullName evidence="1">Non-structural protein 1</fullName>
        <shortName evidence="1">NS1</shortName>
    </recommendedName>
    <alternativeName>
        <fullName evidence="1">NS1A</fullName>
    </alternativeName>
</protein>
<accession>O09687</accession>
<accession>Q76UX7</accession>
<organism>
    <name type="scientific">Influenza A virus (strain A/Equine/London/1416/1973 H7N7)</name>
    <dbReference type="NCBI Taxonomy" id="380340"/>
    <lineage>
        <taxon>Viruses</taxon>
        <taxon>Riboviria</taxon>
        <taxon>Orthornavirae</taxon>
        <taxon>Negarnaviricota</taxon>
        <taxon>Polyploviricotina</taxon>
        <taxon>Insthoviricetes</taxon>
        <taxon>Articulavirales</taxon>
        <taxon>Orthomyxoviridae</taxon>
        <taxon>Alphainfluenzavirus</taxon>
        <taxon>Alphainfluenzavirus influenzae</taxon>
        <taxon>Influenza A virus</taxon>
    </lineage>
</organism>
<comment type="function">
    <text evidence="1">Inhibits post-transcriptional processing of cellular pre-mRNA, by binding and inhibiting two cellular proteins that are required for the 3'-end processing of cellular pre-mRNAs: the 30 kDa cleavage and polyadenylation specificity factor/CPSF4 and the poly(A)-binding protein 2/PABPN1. In turn, unprocessed 3' end pre-mRNAs accumulate in the host nucleus and are no longer exported to the cytoplasm. Cellular protein synthesis is thereby shut off very early after virus infection. Viral protein synthesis is not affected by the inhibition of the cellular 3' end processing machinery because the poly(A) tails of viral mRNAs are produced by the viral polymerase through a stuttering mechanism. Prevents the establishment of the cellular antiviral state by inhibiting TRIM25-mediated RIGI ubiquitination, which normally triggers the antiviral transduction signal that leads to the activation of type I IFN genes by transcription factors IRF3 and IRF7. Also binds poly(A) and U6 snRNA. Inhibits the integrated stress response (ISR) in the infected cell by blocking dsRNA binding by EIF2AK2/PKR and further phosphorylation of EIF2S1/EIF-2ALPHA. Stress granule formation is thus inhibited, which allows protein synthesis and viral replication.</text>
</comment>
<comment type="subunit">
    <text evidence="1">Homodimer. Interacts with host TRIM25 (via coiled coil); this interaction specifically inhibits TRIM25 multimerization and TRIM25-mediated RIGI CARD ubiquitination. Interacts with human EIF2AK2/PKR, CPSF4, IVNS1ABP and PABPN1.</text>
</comment>
<comment type="subcellular location">
    <subcellularLocation>
        <location evidence="1">Host nucleus</location>
    </subcellularLocation>
    <subcellularLocation>
        <location evidence="1">Host cytoplasm</location>
    </subcellularLocation>
    <text evidence="1">In uninfected, transfected cells, NS1 is localized in the nucleus. Only in virus infected cells, the nuclear export signal is unveiled, presumably by a viral protein, and a fraction of NS1 is exported in the cytoplasm.</text>
</comment>
<comment type="alternative products">
    <event type="alternative splicing"/>
    <isoform>
        <id>O09687-1</id>
        <name>NS1</name>
        <sequence type="displayed"/>
    </isoform>
    <isoform>
        <id>O09686-1</id>
        <name>NEP</name>
        <name>NS2</name>
        <sequence type="external"/>
    </isoform>
</comment>
<comment type="domain">
    <text evidence="1">The dsRNA-binding region is required for suppression of RNA silencing.</text>
</comment>
<comment type="PTM">
    <text evidence="1">Upon interferon induction, ISGylated via host HERC5; this results in the impairment of NS1 interaction with RNA targets due to its inability to form homodimers and to interact with host EIF2AK2/PKR.</text>
</comment>
<comment type="similarity">
    <text evidence="1">Belongs to the influenza A viruses NS1 family.</text>
</comment>
<gene>
    <name evidence="1" type="primary">NS</name>
</gene>
<organismHost>
    <name type="scientific">Aves</name>
    <dbReference type="NCBI Taxonomy" id="8782"/>
</organismHost>
<organismHost>
    <name type="scientific">Equus caballus</name>
    <name type="common">Horse</name>
    <dbReference type="NCBI Taxonomy" id="9796"/>
</organismHost>
<organismHost>
    <name type="scientific">Homo sapiens</name>
    <name type="common">Human</name>
    <dbReference type="NCBI Taxonomy" id="9606"/>
</organismHost>
<organismHost>
    <name type="scientific">Phocidae</name>
    <name type="common">true seals</name>
    <dbReference type="NCBI Taxonomy" id="9709"/>
</organismHost>
<evidence type="ECO:0000255" key="1">
    <source>
        <dbReference type="HAMAP-Rule" id="MF_04066"/>
    </source>
</evidence>
<evidence type="ECO:0000256" key="2">
    <source>
        <dbReference type="SAM" id="MobiDB-lite"/>
    </source>
</evidence>
<sequence>MDSNTVSSFQVDCFLWHVRKRFADQELGDAPFLDRLRRDQKSLKGRGSTLGLDIETATRAGKQIVERILEEESDEALKMTIASVPASRYLTDMTLDEMSRDWFMLMPKQKVTGSLCIRMDQAIMDKNIILKANFSVIFERLETLILLRAFTEEGAVVGEISPLPSLPGHTNEDVKNAIGVLIGGLKWNDNTVRVSETLQRFAWRSSHENGRPSFPPKQKRKMARTIESEV</sequence>
<keyword id="KW-0025">Alternative splicing</keyword>
<keyword id="KW-1262">Eukaryotic host gene expression shutoff by virus</keyword>
<keyword id="KW-1035">Host cytoplasm</keyword>
<keyword id="KW-1190">Host gene expression shutoff by virus</keyword>
<keyword id="KW-1192">Host mRNA suppression by virus</keyword>
<keyword id="KW-1048">Host nucleus</keyword>
<keyword id="KW-0945">Host-virus interaction</keyword>
<keyword id="KW-1090">Inhibition of host innate immune response by virus</keyword>
<keyword id="KW-1114">Inhibition of host interferon signaling pathway by virus</keyword>
<keyword id="KW-1102">Inhibition of host PKR by virus</keyword>
<keyword id="KW-1103">Inhibition of host pre-mRNA processing by virus</keyword>
<keyword id="KW-1088">Inhibition of host RIG-I by virus</keyword>
<keyword id="KW-1113">Inhibition of host RLR pathway by virus</keyword>
<keyword id="KW-0922">Interferon antiviral system evasion</keyword>
<keyword id="KW-0694">RNA-binding</keyword>
<keyword id="KW-0832">Ubl conjugation</keyword>
<keyword id="KW-0899">Viral immunoevasion</keyword>
<dbReference type="EMBL" id="U49486">
    <property type="protein sequence ID" value="AAB50999.1"/>
    <property type="molecule type" value="Genomic_RNA"/>
</dbReference>
<dbReference type="EMBL" id="M80954">
    <property type="protein sequence ID" value="AAC35572.1"/>
    <property type="molecule type" value="Genomic_RNA"/>
</dbReference>
<dbReference type="SMR" id="O09687"/>
<dbReference type="GO" id="GO:0030430">
    <property type="term" value="C:host cell cytoplasm"/>
    <property type="evidence" value="ECO:0007669"/>
    <property type="project" value="UniProtKB-SubCell"/>
</dbReference>
<dbReference type="GO" id="GO:0042025">
    <property type="term" value="C:host cell nucleus"/>
    <property type="evidence" value="ECO:0007669"/>
    <property type="project" value="UniProtKB-SubCell"/>
</dbReference>
<dbReference type="GO" id="GO:0030291">
    <property type="term" value="F:protein serine/threonine kinase inhibitor activity"/>
    <property type="evidence" value="ECO:0007669"/>
    <property type="project" value="UniProtKB-KW"/>
</dbReference>
<dbReference type="GO" id="GO:0003723">
    <property type="term" value="F:RNA binding"/>
    <property type="evidence" value="ECO:0007669"/>
    <property type="project" value="UniProtKB-KW"/>
</dbReference>
<dbReference type="GO" id="GO:0039540">
    <property type="term" value="P:symbiont-mediated suppression of host cytoplasmic pattern recognition receptor signaling pathway via inhibition of RIG-I activity"/>
    <property type="evidence" value="ECO:0007669"/>
    <property type="project" value="UniProtKB-KW"/>
</dbReference>
<dbReference type="GO" id="GO:0039657">
    <property type="term" value="P:symbiont-mediated suppression of host gene expression"/>
    <property type="evidence" value="ECO:0007669"/>
    <property type="project" value="UniProtKB-KW"/>
</dbReference>
<dbReference type="GO" id="GO:0039524">
    <property type="term" value="P:symbiont-mediated suppression of host mRNA processing"/>
    <property type="evidence" value="ECO:0007669"/>
    <property type="project" value="UniProtKB-KW"/>
</dbReference>
<dbReference type="GO" id="GO:0039580">
    <property type="term" value="P:symbiont-mediated suppression of host PKR/eIFalpha signaling"/>
    <property type="evidence" value="ECO:0007669"/>
    <property type="project" value="UniProtKB-KW"/>
</dbReference>
<dbReference type="GO" id="GO:0039502">
    <property type="term" value="P:symbiont-mediated suppression of host type I interferon-mediated signaling pathway"/>
    <property type="evidence" value="ECO:0007669"/>
    <property type="project" value="UniProtKB-KW"/>
</dbReference>
<dbReference type="FunFam" id="1.10.287.10:FF:000001">
    <property type="entry name" value="Non-structural protein 1"/>
    <property type="match status" value="1"/>
</dbReference>
<dbReference type="FunFam" id="3.30.420.330:FF:000001">
    <property type="entry name" value="Non-structural protein 1"/>
    <property type="match status" value="1"/>
</dbReference>
<dbReference type="Gene3D" id="3.30.420.330">
    <property type="entry name" value="Influenza virus non-structural protein, effector domain"/>
    <property type="match status" value="1"/>
</dbReference>
<dbReference type="Gene3D" id="1.10.287.10">
    <property type="entry name" value="S15/NS1, RNA-binding"/>
    <property type="match status" value="1"/>
</dbReference>
<dbReference type="HAMAP" id="MF_04066">
    <property type="entry name" value="INFV_NS1"/>
    <property type="match status" value="1"/>
</dbReference>
<dbReference type="InterPro" id="IPR004208">
    <property type="entry name" value="NS1"/>
</dbReference>
<dbReference type="InterPro" id="IPR000256">
    <property type="entry name" value="NS1A"/>
</dbReference>
<dbReference type="InterPro" id="IPR038064">
    <property type="entry name" value="NS1A_effect_dom-like_sf"/>
</dbReference>
<dbReference type="InterPro" id="IPR009068">
    <property type="entry name" value="uS15_NS1_RNA-bd_sf"/>
</dbReference>
<dbReference type="Pfam" id="PF00600">
    <property type="entry name" value="Flu_NS1"/>
    <property type="match status" value="1"/>
</dbReference>
<dbReference type="SUPFAM" id="SSF143021">
    <property type="entry name" value="Ns1 effector domain-like"/>
    <property type="match status" value="1"/>
</dbReference>
<dbReference type="SUPFAM" id="SSF47060">
    <property type="entry name" value="S15/NS1 RNA-binding domain"/>
    <property type="match status" value="1"/>
</dbReference>
<name>NS1_I73A4</name>
<proteinExistence type="inferred from homology"/>
<feature type="chain" id="PRO_0000324253" description="Non-structural protein 1">
    <location>
        <begin position="1"/>
        <end position="230"/>
    </location>
</feature>
<feature type="region of interest" description="RNA-binding and homodimerization" evidence="1">
    <location>
        <begin position="1"/>
        <end position="73"/>
    </location>
</feature>
<feature type="region of interest" description="CPSF4-binding" evidence="1">
    <location>
        <begin position="180"/>
        <end position="215"/>
    </location>
</feature>
<feature type="region of interest" description="Disordered" evidence="2">
    <location>
        <begin position="206"/>
        <end position="230"/>
    </location>
</feature>
<feature type="region of interest" description="PABPN1-binding" evidence="1">
    <location>
        <begin position="223"/>
        <end position="230"/>
    </location>
</feature>
<feature type="short sequence motif" description="Nuclear localization signal" evidence="1">
    <location>
        <begin position="34"/>
        <end position="38"/>
    </location>
</feature>
<feature type="short sequence motif" description="Nuclear export signal" evidence="1">
    <location>
        <begin position="137"/>
        <end position="146"/>
    </location>
</feature>
<reference key="1">
    <citation type="journal article" date="1996" name="J. Virol.">
        <title>Emergence of avian H1N1 influenza viruses in pigs in China.</title>
        <authorList>
            <person name="Guan Y."/>
            <person name="Shortridge K.F."/>
            <person name="Krauss S."/>
            <person name="Li P.H."/>
            <person name="Kawaoka Y."/>
            <person name="Webster R.G."/>
        </authorList>
    </citation>
    <scope>NUCLEOTIDE SEQUENCE [GENOMIC RNA] OF 4-230</scope>
</reference>
<reference key="2">
    <citation type="journal article" date="1998" name="Virus Res.">
        <title>Influence of host species on the evolution of the nonstructural (NS) gene of influenza A viruses.</title>
        <authorList>
            <person name="Kawaoka Y."/>
            <person name="Gorman O.T."/>
            <person name="Ito T."/>
            <person name="Wells K."/>
            <person name="Donis R.O."/>
            <person name="Castrucci M.R."/>
            <person name="Donatelli I."/>
            <person name="Webster R.G."/>
        </authorList>
    </citation>
    <scope>NUCLEOTIDE SEQUENCE [GENOMIC RNA]</scope>
</reference>